<feature type="chain" id="PRO_0000288349" description="Proline--tRNA ligase">
    <location>
        <begin position="1"/>
        <end position="582"/>
    </location>
</feature>
<organism>
    <name type="scientific">Mycobacterium avium (strain 104)</name>
    <dbReference type="NCBI Taxonomy" id="243243"/>
    <lineage>
        <taxon>Bacteria</taxon>
        <taxon>Bacillati</taxon>
        <taxon>Actinomycetota</taxon>
        <taxon>Actinomycetes</taxon>
        <taxon>Mycobacteriales</taxon>
        <taxon>Mycobacteriaceae</taxon>
        <taxon>Mycobacterium</taxon>
        <taxon>Mycobacterium avium complex (MAC)</taxon>
    </lineage>
</organism>
<accession>A0QIY9</accession>
<reference key="1">
    <citation type="submission" date="2006-10" db="EMBL/GenBank/DDBJ databases">
        <authorList>
            <person name="Fleischmann R.D."/>
            <person name="Dodson R.J."/>
            <person name="Haft D.H."/>
            <person name="Merkel J.S."/>
            <person name="Nelson W.C."/>
            <person name="Fraser C.M."/>
        </authorList>
    </citation>
    <scope>NUCLEOTIDE SEQUENCE [LARGE SCALE GENOMIC DNA]</scope>
    <source>
        <strain>104</strain>
    </source>
</reference>
<sequence>MITRMSQLFLRTLRDDPADAEVPSHKLLIRAGYIRPVAPGLYSWLPLGLRVLRRIEHIVREEMNAIGGQEILFPALLPRAPYEATNRWTEYGDSVFRLQDRRGNDYLLGPTHEELFTLTVKGEYSSYKDFPVLLYQIQNKYRDEARPRAGILRVREFVMKDSYSFDIDDAGLKAAYHAHREAYQRIFARLQVRYVIVSAVSGAMGGSASEEFLAESPVGEDTFVRCLESGYAANVEAVITARPDPQPVEGLPEAVVHDTGDTPTIATLVDWANRAGLGRTVTAADTLKNVLLKVRQPGGDWELLAIGLPGDREVDDKRLGAALEPAEYVLLDDADFARYPFLVKGYIGPKALKDNGVRYLVDPRVVDGTSWITGADEPGRHVVGLVAGRDFTADGTIEAAEVRDGDPSPDGAGPLVSARGIEVAHIFQLGRKYTDAFTADVLGEDGKPVRLTMGSYGLGVSRMVAVIAEQHHDELGLRWPASVAPFDVHLVIANKDAQARAGATALADDLDRLGVEVLLDDRQASPGVKFKDAELLGVPWIVVVGRGWADGVVELRDRFAGQTRELATGPSLAADIAAALRG</sequence>
<gene>
    <name evidence="1" type="primary">proS</name>
    <name type="ordered locus">MAV_3700</name>
</gene>
<proteinExistence type="inferred from homology"/>
<comment type="function">
    <text evidence="1">Catalyzes the attachment of proline to tRNA(Pro) in a two-step reaction: proline is first activated by ATP to form Pro-AMP and then transferred to the acceptor end of tRNA(Pro). As ProRS can inadvertently accommodate and process non-cognate amino acids such as alanine and cysteine, to avoid such errors it has two additional distinct editing activities against alanine. One activity is designated as 'pretransfer' editing and involves the tRNA(Pro)-independent hydrolysis of activated Ala-AMP. The other activity is designated 'posttransfer' editing and involves deacylation of mischarged Ala-tRNA(Pro). The misacylated Cys-tRNA(Pro) is not edited by ProRS.</text>
</comment>
<comment type="catalytic activity">
    <reaction evidence="1">
        <text>tRNA(Pro) + L-proline + ATP = L-prolyl-tRNA(Pro) + AMP + diphosphate</text>
        <dbReference type="Rhea" id="RHEA:14305"/>
        <dbReference type="Rhea" id="RHEA-COMP:9700"/>
        <dbReference type="Rhea" id="RHEA-COMP:9702"/>
        <dbReference type="ChEBI" id="CHEBI:30616"/>
        <dbReference type="ChEBI" id="CHEBI:33019"/>
        <dbReference type="ChEBI" id="CHEBI:60039"/>
        <dbReference type="ChEBI" id="CHEBI:78442"/>
        <dbReference type="ChEBI" id="CHEBI:78532"/>
        <dbReference type="ChEBI" id="CHEBI:456215"/>
        <dbReference type="EC" id="6.1.1.15"/>
    </reaction>
</comment>
<comment type="subunit">
    <text evidence="1">Homodimer.</text>
</comment>
<comment type="subcellular location">
    <subcellularLocation>
        <location evidence="1">Cytoplasm</location>
    </subcellularLocation>
</comment>
<comment type="domain">
    <text evidence="1">Consists of three domains: the N-terminal catalytic domain, the editing domain and the C-terminal anticodon-binding domain.</text>
</comment>
<comment type="similarity">
    <text evidence="1">Belongs to the class-II aminoacyl-tRNA synthetase family. ProS type 1 subfamily.</text>
</comment>
<dbReference type="EC" id="6.1.1.15" evidence="1"/>
<dbReference type="EMBL" id="CP000479">
    <property type="protein sequence ID" value="ABK65984.1"/>
    <property type="molecule type" value="Genomic_DNA"/>
</dbReference>
<dbReference type="RefSeq" id="WP_011725627.1">
    <property type="nucleotide sequence ID" value="NC_008595.1"/>
</dbReference>
<dbReference type="SMR" id="A0QIY9"/>
<dbReference type="KEGG" id="mav:MAV_3700"/>
<dbReference type="HOGENOM" id="CLU_016739_0_0_11"/>
<dbReference type="Proteomes" id="UP000001574">
    <property type="component" value="Chromosome"/>
</dbReference>
<dbReference type="GO" id="GO:0005829">
    <property type="term" value="C:cytosol"/>
    <property type="evidence" value="ECO:0007669"/>
    <property type="project" value="TreeGrafter"/>
</dbReference>
<dbReference type="GO" id="GO:0002161">
    <property type="term" value="F:aminoacyl-tRNA deacylase activity"/>
    <property type="evidence" value="ECO:0007669"/>
    <property type="project" value="InterPro"/>
</dbReference>
<dbReference type="GO" id="GO:0005524">
    <property type="term" value="F:ATP binding"/>
    <property type="evidence" value="ECO:0007669"/>
    <property type="project" value="UniProtKB-UniRule"/>
</dbReference>
<dbReference type="GO" id="GO:0004827">
    <property type="term" value="F:proline-tRNA ligase activity"/>
    <property type="evidence" value="ECO:0007669"/>
    <property type="project" value="UniProtKB-UniRule"/>
</dbReference>
<dbReference type="GO" id="GO:0006433">
    <property type="term" value="P:prolyl-tRNA aminoacylation"/>
    <property type="evidence" value="ECO:0007669"/>
    <property type="project" value="UniProtKB-UniRule"/>
</dbReference>
<dbReference type="CDD" id="cd00861">
    <property type="entry name" value="ProRS_anticodon_short"/>
    <property type="match status" value="1"/>
</dbReference>
<dbReference type="CDD" id="cd00779">
    <property type="entry name" value="ProRS_core_prok"/>
    <property type="match status" value="1"/>
</dbReference>
<dbReference type="FunFam" id="3.30.930.10:FF:000065">
    <property type="entry name" value="Proline--tRNA ligase"/>
    <property type="match status" value="1"/>
</dbReference>
<dbReference type="FunFam" id="3.30.930.10:FF:000070">
    <property type="entry name" value="Proline--tRNA ligase"/>
    <property type="match status" value="1"/>
</dbReference>
<dbReference type="FunFam" id="3.40.50.800:FF:000024">
    <property type="entry name" value="Proline--tRNA ligase"/>
    <property type="match status" value="1"/>
</dbReference>
<dbReference type="Gene3D" id="3.40.50.800">
    <property type="entry name" value="Anticodon-binding domain"/>
    <property type="match status" value="1"/>
</dbReference>
<dbReference type="Gene3D" id="3.30.930.10">
    <property type="entry name" value="Bira Bifunctional Protein, Domain 2"/>
    <property type="match status" value="2"/>
</dbReference>
<dbReference type="Gene3D" id="3.90.960.10">
    <property type="entry name" value="YbaK/aminoacyl-tRNA synthetase-associated domain"/>
    <property type="match status" value="1"/>
</dbReference>
<dbReference type="HAMAP" id="MF_01569">
    <property type="entry name" value="Pro_tRNA_synth_type1"/>
    <property type="match status" value="1"/>
</dbReference>
<dbReference type="InterPro" id="IPR002314">
    <property type="entry name" value="aa-tRNA-synt_IIb"/>
</dbReference>
<dbReference type="InterPro" id="IPR006195">
    <property type="entry name" value="aa-tRNA-synth_II"/>
</dbReference>
<dbReference type="InterPro" id="IPR045864">
    <property type="entry name" value="aa-tRNA-synth_II/BPL/LPL"/>
</dbReference>
<dbReference type="InterPro" id="IPR004154">
    <property type="entry name" value="Anticodon-bd"/>
</dbReference>
<dbReference type="InterPro" id="IPR036621">
    <property type="entry name" value="Anticodon-bd_dom_sf"/>
</dbReference>
<dbReference type="InterPro" id="IPR002316">
    <property type="entry name" value="Pro-tRNA-ligase_IIa"/>
</dbReference>
<dbReference type="InterPro" id="IPR004500">
    <property type="entry name" value="Pro-tRNA-synth_IIa_bac-type"/>
</dbReference>
<dbReference type="InterPro" id="IPR023717">
    <property type="entry name" value="Pro-tRNA-Synthase_IIa_type1"/>
</dbReference>
<dbReference type="InterPro" id="IPR050062">
    <property type="entry name" value="Pro-tRNA_synthetase"/>
</dbReference>
<dbReference type="InterPro" id="IPR044140">
    <property type="entry name" value="ProRS_anticodon_short"/>
</dbReference>
<dbReference type="InterPro" id="IPR033730">
    <property type="entry name" value="ProRS_core_prok"/>
</dbReference>
<dbReference type="InterPro" id="IPR036754">
    <property type="entry name" value="YbaK/aa-tRNA-synt-asso_dom_sf"/>
</dbReference>
<dbReference type="InterPro" id="IPR007214">
    <property type="entry name" value="YbaK/aa-tRNA-synth-assoc-dom"/>
</dbReference>
<dbReference type="NCBIfam" id="NF006625">
    <property type="entry name" value="PRK09194.1"/>
    <property type="match status" value="1"/>
</dbReference>
<dbReference type="NCBIfam" id="TIGR00409">
    <property type="entry name" value="proS_fam_II"/>
    <property type="match status" value="1"/>
</dbReference>
<dbReference type="PANTHER" id="PTHR42753">
    <property type="entry name" value="MITOCHONDRIAL RIBOSOME PROTEIN L39/PROLYL-TRNA LIGASE FAMILY MEMBER"/>
    <property type="match status" value="1"/>
</dbReference>
<dbReference type="PANTHER" id="PTHR42753:SF2">
    <property type="entry name" value="PROLINE--TRNA LIGASE"/>
    <property type="match status" value="1"/>
</dbReference>
<dbReference type="Pfam" id="PF03129">
    <property type="entry name" value="HGTP_anticodon"/>
    <property type="match status" value="1"/>
</dbReference>
<dbReference type="Pfam" id="PF00587">
    <property type="entry name" value="tRNA-synt_2b"/>
    <property type="match status" value="1"/>
</dbReference>
<dbReference type="Pfam" id="PF04073">
    <property type="entry name" value="tRNA_edit"/>
    <property type="match status" value="1"/>
</dbReference>
<dbReference type="PRINTS" id="PR01046">
    <property type="entry name" value="TRNASYNTHPRO"/>
</dbReference>
<dbReference type="SUPFAM" id="SSF52954">
    <property type="entry name" value="Class II aaRS ABD-related"/>
    <property type="match status" value="1"/>
</dbReference>
<dbReference type="SUPFAM" id="SSF55681">
    <property type="entry name" value="Class II aaRS and biotin synthetases"/>
    <property type="match status" value="1"/>
</dbReference>
<dbReference type="SUPFAM" id="SSF55826">
    <property type="entry name" value="YbaK/ProRS associated domain"/>
    <property type="match status" value="1"/>
</dbReference>
<dbReference type="PROSITE" id="PS50862">
    <property type="entry name" value="AA_TRNA_LIGASE_II"/>
    <property type="match status" value="1"/>
</dbReference>
<protein>
    <recommendedName>
        <fullName evidence="1">Proline--tRNA ligase</fullName>
        <ecNumber evidence="1">6.1.1.15</ecNumber>
    </recommendedName>
    <alternativeName>
        <fullName evidence="1">Prolyl-tRNA synthetase</fullName>
        <shortName evidence="1">ProRS</shortName>
    </alternativeName>
</protein>
<keyword id="KW-0030">Aminoacyl-tRNA synthetase</keyword>
<keyword id="KW-0067">ATP-binding</keyword>
<keyword id="KW-0963">Cytoplasm</keyword>
<keyword id="KW-0436">Ligase</keyword>
<keyword id="KW-0547">Nucleotide-binding</keyword>
<keyword id="KW-0648">Protein biosynthesis</keyword>
<evidence type="ECO:0000255" key="1">
    <source>
        <dbReference type="HAMAP-Rule" id="MF_01569"/>
    </source>
</evidence>
<name>SYP_MYCA1</name>